<name>RIBB_SHEPA</name>
<protein>
    <recommendedName>
        <fullName evidence="1">3,4-dihydroxy-2-butanone 4-phosphate synthase</fullName>
        <shortName evidence="1">DHBP synthase</shortName>
        <ecNumber evidence="1">4.1.99.12</ecNumber>
    </recommendedName>
</protein>
<keyword id="KW-0456">Lyase</keyword>
<keyword id="KW-0460">Magnesium</keyword>
<keyword id="KW-0464">Manganese</keyword>
<keyword id="KW-0479">Metal-binding</keyword>
<keyword id="KW-1185">Reference proteome</keyword>
<keyword id="KW-0686">Riboflavin biosynthesis</keyword>
<gene>
    <name evidence="1" type="primary">ribB</name>
    <name type="ordered locus">Spea_0131</name>
</gene>
<sequence length="212" mass="23015">MNQSLLAPYGNPIERVNAALSALRQGKGVLVVDDEDRENEGDLIYSAETLTNQQMALLIRECSGIVCLCLTDERIKQLQLPPMVSDNNSQYGTAFTVSIEAKQGVTTGVSAADRVTTIKAAIADDAKPDDLARPGHVYPLRARPGGVLERRGHTEGTVDLMKLAGLQPFGVLCEVTLPDGTMARLPEIVEFAQQHDMPVLTIEDIVAYRNTQ</sequence>
<proteinExistence type="inferred from homology"/>
<organism>
    <name type="scientific">Shewanella pealeana (strain ATCC 700345 / ANG-SQ1)</name>
    <dbReference type="NCBI Taxonomy" id="398579"/>
    <lineage>
        <taxon>Bacteria</taxon>
        <taxon>Pseudomonadati</taxon>
        <taxon>Pseudomonadota</taxon>
        <taxon>Gammaproteobacteria</taxon>
        <taxon>Alteromonadales</taxon>
        <taxon>Shewanellaceae</taxon>
        <taxon>Shewanella</taxon>
    </lineage>
</organism>
<dbReference type="EC" id="4.1.99.12" evidence="1"/>
<dbReference type="EMBL" id="CP000851">
    <property type="protein sequence ID" value="ABV85460.1"/>
    <property type="molecule type" value="Genomic_DNA"/>
</dbReference>
<dbReference type="RefSeq" id="WP_012153406.1">
    <property type="nucleotide sequence ID" value="NC_009901.1"/>
</dbReference>
<dbReference type="SMR" id="A8GYS3"/>
<dbReference type="STRING" id="398579.Spea_0131"/>
<dbReference type="KEGG" id="spl:Spea_0131"/>
<dbReference type="eggNOG" id="COG0108">
    <property type="taxonomic scope" value="Bacteria"/>
</dbReference>
<dbReference type="HOGENOM" id="CLU_020273_3_0_6"/>
<dbReference type="OrthoDB" id="9793111at2"/>
<dbReference type="UniPathway" id="UPA00275">
    <property type="reaction ID" value="UER00399"/>
</dbReference>
<dbReference type="Proteomes" id="UP000002608">
    <property type="component" value="Chromosome"/>
</dbReference>
<dbReference type="GO" id="GO:0005829">
    <property type="term" value="C:cytosol"/>
    <property type="evidence" value="ECO:0007669"/>
    <property type="project" value="TreeGrafter"/>
</dbReference>
<dbReference type="GO" id="GO:0008686">
    <property type="term" value="F:3,4-dihydroxy-2-butanone-4-phosphate synthase activity"/>
    <property type="evidence" value="ECO:0007669"/>
    <property type="project" value="UniProtKB-UniRule"/>
</dbReference>
<dbReference type="GO" id="GO:0000287">
    <property type="term" value="F:magnesium ion binding"/>
    <property type="evidence" value="ECO:0007669"/>
    <property type="project" value="UniProtKB-UniRule"/>
</dbReference>
<dbReference type="GO" id="GO:0030145">
    <property type="term" value="F:manganese ion binding"/>
    <property type="evidence" value="ECO:0007669"/>
    <property type="project" value="UniProtKB-UniRule"/>
</dbReference>
<dbReference type="GO" id="GO:0009231">
    <property type="term" value="P:riboflavin biosynthetic process"/>
    <property type="evidence" value="ECO:0007669"/>
    <property type="project" value="UniProtKB-UniRule"/>
</dbReference>
<dbReference type="FunFam" id="3.90.870.10:FF:000002">
    <property type="entry name" value="3,4-dihydroxy-2-butanone 4-phosphate synthase"/>
    <property type="match status" value="1"/>
</dbReference>
<dbReference type="Gene3D" id="3.90.870.10">
    <property type="entry name" value="DHBP synthase"/>
    <property type="match status" value="1"/>
</dbReference>
<dbReference type="HAMAP" id="MF_00180">
    <property type="entry name" value="RibB"/>
    <property type="match status" value="1"/>
</dbReference>
<dbReference type="InterPro" id="IPR017945">
    <property type="entry name" value="DHBP_synth_RibB-like_a/b_dom"/>
</dbReference>
<dbReference type="InterPro" id="IPR000422">
    <property type="entry name" value="DHBP_synthase_RibB"/>
</dbReference>
<dbReference type="NCBIfam" id="TIGR00506">
    <property type="entry name" value="ribB"/>
    <property type="match status" value="1"/>
</dbReference>
<dbReference type="PANTHER" id="PTHR21327:SF38">
    <property type="entry name" value="3,4-DIHYDROXY-2-BUTANONE 4-PHOSPHATE SYNTHASE"/>
    <property type="match status" value="1"/>
</dbReference>
<dbReference type="PANTHER" id="PTHR21327">
    <property type="entry name" value="GTP CYCLOHYDROLASE II-RELATED"/>
    <property type="match status" value="1"/>
</dbReference>
<dbReference type="Pfam" id="PF00926">
    <property type="entry name" value="DHBP_synthase"/>
    <property type="match status" value="1"/>
</dbReference>
<dbReference type="SUPFAM" id="SSF55821">
    <property type="entry name" value="YrdC/RibB"/>
    <property type="match status" value="1"/>
</dbReference>
<comment type="function">
    <text evidence="1">Catalyzes the conversion of D-ribulose 5-phosphate to formate and 3,4-dihydroxy-2-butanone 4-phosphate.</text>
</comment>
<comment type="catalytic activity">
    <reaction evidence="1">
        <text>D-ribulose 5-phosphate = (2S)-2-hydroxy-3-oxobutyl phosphate + formate + H(+)</text>
        <dbReference type="Rhea" id="RHEA:18457"/>
        <dbReference type="ChEBI" id="CHEBI:15378"/>
        <dbReference type="ChEBI" id="CHEBI:15740"/>
        <dbReference type="ChEBI" id="CHEBI:58121"/>
        <dbReference type="ChEBI" id="CHEBI:58830"/>
        <dbReference type="EC" id="4.1.99.12"/>
    </reaction>
</comment>
<comment type="cofactor">
    <cofactor evidence="1">
        <name>Mg(2+)</name>
        <dbReference type="ChEBI" id="CHEBI:18420"/>
    </cofactor>
    <cofactor evidence="1">
        <name>Mn(2+)</name>
        <dbReference type="ChEBI" id="CHEBI:29035"/>
    </cofactor>
    <text evidence="1">Binds 2 divalent metal cations per subunit. Magnesium or manganese.</text>
</comment>
<comment type="pathway">
    <text evidence="1">Cofactor biosynthesis; riboflavin biosynthesis; 2-hydroxy-3-oxobutyl phosphate from D-ribulose 5-phosphate: step 1/1.</text>
</comment>
<comment type="subunit">
    <text evidence="1">Homodimer.</text>
</comment>
<comment type="similarity">
    <text evidence="1">Belongs to the DHBP synthase family.</text>
</comment>
<reference key="1">
    <citation type="submission" date="2007-10" db="EMBL/GenBank/DDBJ databases">
        <title>Complete sequence of Shewanella pealeana ATCC 700345.</title>
        <authorList>
            <consortium name="US DOE Joint Genome Institute"/>
            <person name="Copeland A."/>
            <person name="Lucas S."/>
            <person name="Lapidus A."/>
            <person name="Barry K."/>
            <person name="Glavina del Rio T."/>
            <person name="Dalin E."/>
            <person name="Tice H."/>
            <person name="Pitluck S."/>
            <person name="Chertkov O."/>
            <person name="Brettin T."/>
            <person name="Bruce D."/>
            <person name="Detter J.C."/>
            <person name="Han C."/>
            <person name="Schmutz J."/>
            <person name="Larimer F."/>
            <person name="Land M."/>
            <person name="Hauser L."/>
            <person name="Kyrpides N."/>
            <person name="Kim E."/>
            <person name="Zhao J.-S.Z."/>
            <person name="Manno D."/>
            <person name="Hawari J."/>
            <person name="Richardson P."/>
        </authorList>
    </citation>
    <scope>NUCLEOTIDE SEQUENCE [LARGE SCALE GENOMIC DNA]</scope>
    <source>
        <strain>ATCC 700345 / ANG-SQ1</strain>
    </source>
</reference>
<feature type="chain" id="PRO_1000077270" description="3,4-dihydroxy-2-butanone 4-phosphate synthase">
    <location>
        <begin position="1"/>
        <end position="212"/>
    </location>
</feature>
<feature type="binding site" evidence="1">
    <location>
        <begin position="37"/>
        <end position="38"/>
    </location>
    <ligand>
        <name>D-ribulose 5-phosphate</name>
        <dbReference type="ChEBI" id="CHEBI:58121"/>
    </ligand>
</feature>
<feature type="binding site" evidence="1">
    <location>
        <position position="38"/>
    </location>
    <ligand>
        <name>Mg(2+)</name>
        <dbReference type="ChEBI" id="CHEBI:18420"/>
        <label>1</label>
    </ligand>
</feature>
<feature type="binding site" evidence="1">
    <location>
        <position position="38"/>
    </location>
    <ligand>
        <name>Mg(2+)</name>
        <dbReference type="ChEBI" id="CHEBI:18420"/>
        <label>2</label>
    </ligand>
</feature>
<feature type="binding site" evidence="1">
    <location>
        <position position="42"/>
    </location>
    <ligand>
        <name>D-ribulose 5-phosphate</name>
        <dbReference type="ChEBI" id="CHEBI:58121"/>
    </ligand>
</feature>
<feature type="binding site" evidence="1">
    <location>
        <begin position="150"/>
        <end position="154"/>
    </location>
    <ligand>
        <name>D-ribulose 5-phosphate</name>
        <dbReference type="ChEBI" id="CHEBI:58121"/>
    </ligand>
</feature>
<feature type="binding site" evidence="1">
    <location>
        <position position="153"/>
    </location>
    <ligand>
        <name>Mg(2+)</name>
        <dbReference type="ChEBI" id="CHEBI:18420"/>
        <label>2</label>
    </ligand>
</feature>
<feature type="binding site" evidence="1">
    <location>
        <position position="174"/>
    </location>
    <ligand>
        <name>D-ribulose 5-phosphate</name>
        <dbReference type="ChEBI" id="CHEBI:58121"/>
    </ligand>
</feature>
<feature type="site" description="Essential for catalytic activity" evidence="1">
    <location>
        <position position="136"/>
    </location>
</feature>
<feature type="site" description="Essential for catalytic activity" evidence="1">
    <location>
        <position position="174"/>
    </location>
</feature>
<evidence type="ECO:0000255" key="1">
    <source>
        <dbReference type="HAMAP-Rule" id="MF_00180"/>
    </source>
</evidence>
<accession>A8GYS3</accession>